<sequence length="179" mass="19030">MFNGVGWGEVVVLLLIGLFVFGPDRLPKAARDAGRVLRQLRQLANGMRNDLRSELGPEFADLDIRDLHPKTFVRKHLFEDDPVLPPYLTKRTSLDSLLLGDDPPAAPSLTKSSLPRDPAAKDPARPGAEAAVPAAPPGPVSPMLSKVSPSKASAARSVPAQPARSDGPATEVPFDSDAT</sequence>
<keyword id="KW-1003">Cell membrane</keyword>
<keyword id="KW-0472">Membrane</keyword>
<keyword id="KW-0653">Protein transport</keyword>
<keyword id="KW-1185">Reference proteome</keyword>
<keyword id="KW-0811">Translocation</keyword>
<keyword id="KW-0812">Transmembrane</keyword>
<keyword id="KW-1133">Transmembrane helix</keyword>
<keyword id="KW-0813">Transport</keyword>
<dbReference type="EMBL" id="CP000249">
    <property type="protein sequence ID" value="ABD13179.1"/>
    <property type="molecule type" value="Genomic_DNA"/>
</dbReference>
<dbReference type="RefSeq" id="WP_011438203.1">
    <property type="nucleotide sequence ID" value="NZ_JENI01000094.1"/>
</dbReference>
<dbReference type="SMR" id="Q2J6B3"/>
<dbReference type="STRING" id="106370.Francci3_3829"/>
<dbReference type="KEGG" id="fra:Francci3_3829"/>
<dbReference type="eggNOG" id="COG1826">
    <property type="taxonomic scope" value="Bacteria"/>
</dbReference>
<dbReference type="HOGENOM" id="CLU_086034_2_0_11"/>
<dbReference type="OrthoDB" id="3267321at2"/>
<dbReference type="Proteomes" id="UP000001937">
    <property type="component" value="Chromosome"/>
</dbReference>
<dbReference type="GO" id="GO:0033281">
    <property type="term" value="C:TAT protein transport complex"/>
    <property type="evidence" value="ECO:0007669"/>
    <property type="project" value="UniProtKB-UniRule"/>
</dbReference>
<dbReference type="GO" id="GO:0008320">
    <property type="term" value="F:protein transmembrane transporter activity"/>
    <property type="evidence" value="ECO:0007669"/>
    <property type="project" value="UniProtKB-UniRule"/>
</dbReference>
<dbReference type="GO" id="GO:0043953">
    <property type="term" value="P:protein transport by the Tat complex"/>
    <property type="evidence" value="ECO:0007669"/>
    <property type="project" value="UniProtKB-UniRule"/>
</dbReference>
<dbReference type="Gene3D" id="1.20.5.3310">
    <property type="match status" value="1"/>
</dbReference>
<dbReference type="HAMAP" id="MF_00237">
    <property type="entry name" value="TatB"/>
    <property type="match status" value="1"/>
</dbReference>
<dbReference type="InterPro" id="IPR003369">
    <property type="entry name" value="TatA/B/E"/>
</dbReference>
<dbReference type="InterPro" id="IPR018448">
    <property type="entry name" value="TatB"/>
</dbReference>
<dbReference type="NCBIfam" id="NF002376">
    <property type="entry name" value="PRK01371.1-3"/>
    <property type="match status" value="1"/>
</dbReference>
<dbReference type="NCBIfam" id="NF002377">
    <property type="entry name" value="PRK01371.1-4"/>
    <property type="match status" value="1"/>
</dbReference>
<dbReference type="PANTHER" id="PTHR33162">
    <property type="entry name" value="SEC-INDEPENDENT PROTEIN TRANSLOCASE PROTEIN TATA, CHLOROPLASTIC"/>
    <property type="match status" value="1"/>
</dbReference>
<dbReference type="PANTHER" id="PTHR33162:SF1">
    <property type="entry name" value="SEC-INDEPENDENT PROTEIN TRANSLOCASE PROTEIN TATA, CHLOROPLASTIC"/>
    <property type="match status" value="1"/>
</dbReference>
<dbReference type="Pfam" id="PF02416">
    <property type="entry name" value="TatA_B_E"/>
    <property type="match status" value="1"/>
</dbReference>
<dbReference type="PRINTS" id="PR01506">
    <property type="entry name" value="TATBPROTEIN"/>
</dbReference>
<proteinExistence type="inferred from homology"/>
<gene>
    <name evidence="1" type="primary">tatB</name>
    <name type="ordered locus">Francci3_3829</name>
</gene>
<reference key="1">
    <citation type="journal article" date="2007" name="Genome Res.">
        <title>Genome characteristics of facultatively symbiotic Frankia sp. strains reflect host range and host plant biogeography.</title>
        <authorList>
            <person name="Normand P."/>
            <person name="Lapierre P."/>
            <person name="Tisa L.S."/>
            <person name="Gogarten J.P."/>
            <person name="Alloisio N."/>
            <person name="Bagnarol E."/>
            <person name="Bassi C.A."/>
            <person name="Berry A.M."/>
            <person name="Bickhart D.M."/>
            <person name="Choisne N."/>
            <person name="Couloux A."/>
            <person name="Cournoyer B."/>
            <person name="Cruveiller S."/>
            <person name="Daubin V."/>
            <person name="Demange N."/>
            <person name="Francino M.P."/>
            <person name="Goltsman E."/>
            <person name="Huang Y."/>
            <person name="Kopp O.R."/>
            <person name="Labarre L."/>
            <person name="Lapidus A."/>
            <person name="Lavire C."/>
            <person name="Marechal J."/>
            <person name="Martinez M."/>
            <person name="Mastronunzio J.E."/>
            <person name="Mullin B.C."/>
            <person name="Niemann J."/>
            <person name="Pujic P."/>
            <person name="Rawnsley T."/>
            <person name="Rouy Z."/>
            <person name="Schenowitz C."/>
            <person name="Sellstedt A."/>
            <person name="Tavares F."/>
            <person name="Tomkins J.P."/>
            <person name="Vallenet D."/>
            <person name="Valverde C."/>
            <person name="Wall L.G."/>
            <person name="Wang Y."/>
            <person name="Medigue C."/>
            <person name="Benson D.R."/>
        </authorList>
    </citation>
    <scope>NUCLEOTIDE SEQUENCE [LARGE SCALE GENOMIC DNA]</scope>
    <source>
        <strain>DSM 45818 / CECT 9043 / HFP020203 / CcI3</strain>
    </source>
</reference>
<evidence type="ECO:0000255" key="1">
    <source>
        <dbReference type="HAMAP-Rule" id="MF_00237"/>
    </source>
</evidence>
<evidence type="ECO:0000256" key="2">
    <source>
        <dbReference type="SAM" id="MobiDB-lite"/>
    </source>
</evidence>
<comment type="function">
    <text evidence="1">Part of the twin-arginine translocation (Tat) system that transports large folded proteins containing a characteristic twin-arginine motif in their signal peptide across membranes. Together with TatC, TatB is part of a receptor directly interacting with Tat signal peptides. TatB may form an oligomeric binding site that transiently accommodates folded Tat precursor proteins before their translocation.</text>
</comment>
<comment type="subunit">
    <text evidence="1">The Tat system comprises two distinct complexes: a TatABC complex, containing multiple copies of TatA, TatB and TatC subunits, and a separate TatA complex, containing only TatA subunits. Substrates initially bind to the TatABC complex, which probably triggers association of the separate TatA complex to form the active translocon.</text>
</comment>
<comment type="subcellular location">
    <subcellularLocation>
        <location evidence="1">Cell membrane</location>
        <topology evidence="1">Single-pass membrane protein</topology>
    </subcellularLocation>
</comment>
<comment type="similarity">
    <text evidence="1">Belongs to the TatB family.</text>
</comment>
<accession>Q2J6B3</accession>
<protein>
    <recommendedName>
        <fullName evidence="1">Sec-independent protein translocase protein TatB</fullName>
    </recommendedName>
</protein>
<organism>
    <name type="scientific">Frankia casuarinae (strain DSM 45818 / CECT 9043 / HFP020203 / CcI3)</name>
    <dbReference type="NCBI Taxonomy" id="106370"/>
    <lineage>
        <taxon>Bacteria</taxon>
        <taxon>Bacillati</taxon>
        <taxon>Actinomycetota</taxon>
        <taxon>Actinomycetes</taxon>
        <taxon>Frankiales</taxon>
        <taxon>Frankiaceae</taxon>
        <taxon>Frankia</taxon>
    </lineage>
</organism>
<feature type="chain" id="PRO_1000100634" description="Sec-independent protein translocase protein TatB">
    <location>
        <begin position="1"/>
        <end position="179"/>
    </location>
</feature>
<feature type="transmembrane region" description="Helical" evidence="1">
    <location>
        <begin position="2"/>
        <end position="22"/>
    </location>
</feature>
<feature type="region of interest" description="Disordered" evidence="2">
    <location>
        <begin position="98"/>
        <end position="179"/>
    </location>
</feature>
<feature type="compositionally biased region" description="Low complexity" evidence="2">
    <location>
        <begin position="98"/>
        <end position="109"/>
    </location>
</feature>
<name>TATB_FRACC</name>